<name>CTAA_BRASO</name>
<evidence type="ECO:0000255" key="1">
    <source>
        <dbReference type="HAMAP-Rule" id="MF_01665"/>
    </source>
</evidence>
<keyword id="KW-1003">Cell membrane</keyword>
<keyword id="KW-0350">Heme biosynthesis</keyword>
<keyword id="KW-0408">Iron</keyword>
<keyword id="KW-0472">Membrane</keyword>
<keyword id="KW-0479">Metal-binding</keyword>
<keyword id="KW-0560">Oxidoreductase</keyword>
<keyword id="KW-1185">Reference proteome</keyword>
<keyword id="KW-0812">Transmembrane</keyword>
<keyword id="KW-1133">Transmembrane helix</keyword>
<dbReference type="EC" id="1.17.99.9" evidence="1"/>
<dbReference type="EMBL" id="CU234118">
    <property type="protein sequence ID" value="CAL77976.1"/>
    <property type="molecule type" value="Genomic_DNA"/>
</dbReference>
<dbReference type="RefSeq" id="WP_011927097.1">
    <property type="nucleotide sequence ID" value="NC_009445.1"/>
</dbReference>
<dbReference type="SMR" id="A4YVQ0"/>
<dbReference type="STRING" id="114615.BRADO4225"/>
<dbReference type="KEGG" id="bra:BRADO4225"/>
<dbReference type="eggNOG" id="COG1612">
    <property type="taxonomic scope" value="Bacteria"/>
</dbReference>
<dbReference type="HOGENOM" id="CLU_017627_0_0_5"/>
<dbReference type="OrthoDB" id="9793156at2"/>
<dbReference type="UniPathway" id="UPA00269">
    <property type="reaction ID" value="UER00713"/>
</dbReference>
<dbReference type="Proteomes" id="UP000001994">
    <property type="component" value="Chromosome"/>
</dbReference>
<dbReference type="GO" id="GO:0005886">
    <property type="term" value="C:plasma membrane"/>
    <property type="evidence" value="ECO:0007669"/>
    <property type="project" value="UniProtKB-SubCell"/>
</dbReference>
<dbReference type="GO" id="GO:0046872">
    <property type="term" value="F:metal ion binding"/>
    <property type="evidence" value="ECO:0007669"/>
    <property type="project" value="UniProtKB-KW"/>
</dbReference>
<dbReference type="GO" id="GO:0016653">
    <property type="term" value="F:oxidoreductase activity, acting on NAD(P)H, heme protein as acceptor"/>
    <property type="evidence" value="ECO:0007669"/>
    <property type="project" value="InterPro"/>
</dbReference>
<dbReference type="GO" id="GO:0006784">
    <property type="term" value="P:heme A biosynthetic process"/>
    <property type="evidence" value="ECO:0007669"/>
    <property type="project" value="UniProtKB-UniRule"/>
</dbReference>
<dbReference type="HAMAP" id="MF_01665">
    <property type="entry name" value="HemeA_synth_type2"/>
    <property type="match status" value="1"/>
</dbReference>
<dbReference type="InterPro" id="IPR003780">
    <property type="entry name" value="COX15/CtaA_fam"/>
</dbReference>
<dbReference type="InterPro" id="IPR023754">
    <property type="entry name" value="HemeA_Synthase_type2"/>
</dbReference>
<dbReference type="PANTHER" id="PTHR23289">
    <property type="entry name" value="CYTOCHROME C OXIDASE ASSEMBLY PROTEIN COX15"/>
    <property type="match status" value="1"/>
</dbReference>
<dbReference type="PANTHER" id="PTHR23289:SF2">
    <property type="entry name" value="CYTOCHROME C OXIDASE ASSEMBLY PROTEIN COX15 HOMOLOG"/>
    <property type="match status" value="1"/>
</dbReference>
<dbReference type="Pfam" id="PF02628">
    <property type="entry name" value="COX15-CtaA"/>
    <property type="match status" value="1"/>
</dbReference>
<organism>
    <name type="scientific">Bradyrhizobium sp. (strain ORS 278)</name>
    <dbReference type="NCBI Taxonomy" id="114615"/>
    <lineage>
        <taxon>Bacteria</taxon>
        <taxon>Pseudomonadati</taxon>
        <taxon>Pseudomonadota</taxon>
        <taxon>Alphaproteobacteria</taxon>
        <taxon>Hyphomicrobiales</taxon>
        <taxon>Nitrobacteraceae</taxon>
        <taxon>Bradyrhizobium</taxon>
    </lineage>
</organism>
<accession>A4YVQ0</accession>
<feature type="chain" id="PRO_0000349019" description="Heme A synthase">
    <location>
        <begin position="1"/>
        <end position="362"/>
    </location>
</feature>
<feature type="transmembrane region" description="Helical" evidence="1">
    <location>
        <begin position="11"/>
        <end position="31"/>
    </location>
</feature>
<feature type="transmembrane region" description="Helical" evidence="1">
    <location>
        <begin position="102"/>
        <end position="122"/>
    </location>
</feature>
<feature type="transmembrane region" description="Helical" evidence="1">
    <location>
        <begin position="128"/>
        <end position="148"/>
    </location>
</feature>
<feature type="transmembrane region" description="Helical" evidence="1">
    <location>
        <begin position="159"/>
        <end position="179"/>
    </location>
</feature>
<feature type="transmembrane region" description="Helical" evidence="1">
    <location>
        <begin position="198"/>
        <end position="218"/>
    </location>
</feature>
<feature type="transmembrane region" description="Helical" evidence="1">
    <location>
        <begin position="264"/>
        <end position="286"/>
    </location>
</feature>
<feature type="transmembrane region" description="Helical" evidence="1">
    <location>
        <begin position="297"/>
        <end position="317"/>
    </location>
</feature>
<feature type="transmembrane region" description="Helical" evidence="1">
    <location>
        <begin position="318"/>
        <end position="338"/>
    </location>
</feature>
<feature type="binding site" description="axial binding residue" evidence="1">
    <location>
        <position position="262"/>
    </location>
    <ligand>
        <name>heme</name>
        <dbReference type="ChEBI" id="CHEBI:30413"/>
    </ligand>
    <ligandPart>
        <name>Fe</name>
        <dbReference type="ChEBI" id="CHEBI:18248"/>
    </ligandPart>
</feature>
<feature type="binding site" description="axial binding residue" evidence="1">
    <location>
        <position position="323"/>
    </location>
    <ligand>
        <name>heme</name>
        <dbReference type="ChEBI" id="CHEBI:30413"/>
    </ligand>
    <ligandPart>
        <name>Fe</name>
        <dbReference type="ChEBI" id="CHEBI:18248"/>
    </ligandPart>
</feature>
<sequence>MTTVPPTRDTAAIRIWLSIVAGLIALMVLVGGATRLTESGLSIVEWKPVTGTLPPLSEQAWSDAFEAYKTIPQYRQMNAGMTLHEFKTIFWWEWAHRLLGRVIGMVYLLPFLWFLWRGAVSGPLGRRLWLIFGLGALQGAVGWWMVASGLTERTEVAPVRLATHLSLALLIFASIVWTLRRLKPRDEAEVPGRLRLTAWALVGVTFVQLYLGALVAGLRAGLVYNTWPEIDGGLIPAAANLWAHAPWWINLFENHLTVQFMHRMTAYTLLALAAWHAFDVMRAGAGRDAVRGAHRLLAAILVQAVLGIATLLMVVPISLALLHQGTALIVLTFAVLQAERLSPRRVAAVAVPQAAVAAGQAG</sequence>
<gene>
    <name evidence="1" type="primary">ctaA</name>
    <name type="ordered locus">BRADO4225</name>
</gene>
<comment type="function">
    <text evidence="1">Catalyzes the conversion of heme O to heme A by two successive hydroxylations of the methyl group at C8. The first hydroxylation forms heme I, the second hydroxylation results in an unstable dihydroxymethyl group, which spontaneously dehydrates, resulting in the formyl group of heme A.</text>
</comment>
<comment type="catalytic activity">
    <reaction evidence="1">
        <text>Fe(II)-heme o + 2 A + H2O = Fe(II)-heme a + 2 AH2</text>
        <dbReference type="Rhea" id="RHEA:63388"/>
        <dbReference type="ChEBI" id="CHEBI:13193"/>
        <dbReference type="ChEBI" id="CHEBI:15377"/>
        <dbReference type="ChEBI" id="CHEBI:17499"/>
        <dbReference type="ChEBI" id="CHEBI:60530"/>
        <dbReference type="ChEBI" id="CHEBI:61715"/>
        <dbReference type="EC" id="1.17.99.9"/>
    </reaction>
    <physiologicalReaction direction="left-to-right" evidence="1">
        <dbReference type="Rhea" id="RHEA:63389"/>
    </physiologicalReaction>
</comment>
<comment type="cofactor">
    <cofactor evidence="1">
        <name>heme b</name>
        <dbReference type="ChEBI" id="CHEBI:60344"/>
    </cofactor>
</comment>
<comment type="pathway">
    <text evidence="1">Porphyrin-containing compound metabolism; heme A biosynthesis; heme A from heme O: step 1/1.</text>
</comment>
<comment type="subunit">
    <text evidence="1">Interacts with CtaB.</text>
</comment>
<comment type="subcellular location">
    <subcellularLocation>
        <location evidence="1">Cell membrane</location>
        <topology evidence="1">Multi-pass membrane protein</topology>
    </subcellularLocation>
</comment>
<comment type="similarity">
    <text evidence="1">Belongs to the COX15/CtaA family. Type 2 subfamily.</text>
</comment>
<proteinExistence type="inferred from homology"/>
<reference key="1">
    <citation type="journal article" date="2007" name="Science">
        <title>Legumes symbioses: absence of nod genes in photosynthetic bradyrhizobia.</title>
        <authorList>
            <person name="Giraud E."/>
            <person name="Moulin L."/>
            <person name="Vallenet D."/>
            <person name="Barbe V."/>
            <person name="Cytryn E."/>
            <person name="Avarre J.-C."/>
            <person name="Jaubert M."/>
            <person name="Simon D."/>
            <person name="Cartieaux F."/>
            <person name="Prin Y."/>
            <person name="Bena G."/>
            <person name="Hannibal L."/>
            <person name="Fardoux J."/>
            <person name="Kojadinovic M."/>
            <person name="Vuillet L."/>
            <person name="Lajus A."/>
            <person name="Cruveiller S."/>
            <person name="Rouy Z."/>
            <person name="Mangenot S."/>
            <person name="Segurens B."/>
            <person name="Dossat C."/>
            <person name="Franck W.L."/>
            <person name="Chang W.-S."/>
            <person name="Saunders E."/>
            <person name="Bruce D."/>
            <person name="Richardson P."/>
            <person name="Normand P."/>
            <person name="Dreyfus B."/>
            <person name="Pignol D."/>
            <person name="Stacey G."/>
            <person name="Emerich D."/>
            <person name="Vermeglio A."/>
            <person name="Medigue C."/>
            <person name="Sadowsky M."/>
        </authorList>
    </citation>
    <scope>NUCLEOTIDE SEQUENCE [LARGE SCALE GENOMIC DNA]</scope>
    <source>
        <strain>ORS 278</strain>
    </source>
</reference>
<protein>
    <recommendedName>
        <fullName evidence="1">Heme A synthase</fullName>
        <shortName evidence="1">HAS</shortName>
        <ecNumber evidence="1">1.17.99.9</ecNumber>
    </recommendedName>
    <alternativeName>
        <fullName evidence="1">Cytochrome aa3-controlling protein</fullName>
    </alternativeName>
</protein>